<proteinExistence type="inferred from homology"/>
<organism>
    <name type="scientific">Archaeoglobus fulgidus (strain ATCC 49558 / DSM 4304 / JCM 9628 / NBRC 100126 / VC-16)</name>
    <dbReference type="NCBI Taxonomy" id="224325"/>
    <lineage>
        <taxon>Archaea</taxon>
        <taxon>Methanobacteriati</taxon>
        <taxon>Methanobacteriota</taxon>
        <taxon>Archaeoglobi</taxon>
        <taxon>Archaeoglobales</taxon>
        <taxon>Archaeoglobaceae</taxon>
        <taxon>Archaeoglobus</taxon>
    </lineage>
</organism>
<sequence>MPKIIEAIYENGVFKPLQKVDLKEGEKAKIVLESISDKTFGILKASETEIKKVLEEIDDFWGVC</sequence>
<reference key="1">
    <citation type="journal article" date="1997" name="Nature">
        <title>The complete genome sequence of the hyperthermophilic, sulphate-reducing archaeon Archaeoglobus fulgidus.</title>
        <authorList>
            <person name="Klenk H.-P."/>
            <person name="Clayton R.A."/>
            <person name="Tomb J.-F."/>
            <person name="White O."/>
            <person name="Nelson K.E."/>
            <person name="Ketchum K.A."/>
            <person name="Dodson R.J."/>
            <person name="Gwinn M.L."/>
            <person name="Hickey E.K."/>
            <person name="Peterson J.D."/>
            <person name="Richardson D.L."/>
            <person name="Kerlavage A.R."/>
            <person name="Graham D.E."/>
            <person name="Kyrpides N.C."/>
            <person name="Fleischmann R.D."/>
            <person name="Quackenbush J."/>
            <person name="Lee N.H."/>
            <person name="Sutton G.G."/>
            <person name="Gill S.R."/>
            <person name="Kirkness E.F."/>
            <person name="Dougherty B.A."/>
            <person name="McKenney K."/>
            <person name="Adams M.D."/>
            <person name="Loftus B.J."/>
            <person name="Peterson S.N."/>
            <person name="Reich C.I."/>
            <person name="McNeil L.K."/>
            <person name="Badger J.H."/>
            <person name="Glodek A."/>
            <person name="Zhou L."/>
            <person name="Overbeek R."/>
            <person name="Gocayne J.D."/>
            <person name="Weidman J.F."/>
            <person name="McDonald L.A."/>
            <person name="Utterback T.R."/>
            <person name="Cotton M.D."/>
            <person name="Spriggs T."/>
            <person name="Artiach P."/>
            <person name="Kaine B.P."/>
            <person name="Sykes S.M."/>
            <person name="Sadow P.W."/>
            <person name="D'Andrea K.P."/>
            <person name="Bowman C."/>
            <person name="Fujii C."/>
            <person name="Garland S.A."/>
            <person name="Mason T.M."/>
            <person name="Olsen G.J."/>
            <person name="Fraser C.M."/>
            <person name="Smith H.O."/>
            <person name="Woese C.R."/>
            <person name="Venter J.C."/>
        </authorList>
    </citation>
    <scope>NUCLEOTIDE SEQUENCE [LARGE SCALE GENOMIC DNA]</scope>
    <source>
        <strain>ATCC 49558 / DSM 4304 / JCM 9628 / NBRC 100126 / VC-16</strain>
    </source>
</reference>
<reference key="2">
    <citation type="journal article" date="2005" name="Nucleic Acids Res.">
        <title>Toxin-antitoxin loci are highly abundant in free-living but lost from host-associated prokaryotes.</title>
        <authorList>
            <person name="Pandey D.P."/>
            <person name="Gerdes K."/>
        </authorList>
    </citation>
    <scope>IDENTIFICATION</scope>
    <scope>POSSIBLE FUNCTION</scope>
    <source>
        <strain>ATCC 49558 / DSM 4304 / JCM 9628 / NBRC 100126 / VC-16</strain>
    </source>
</reference>
<dbReference type="EMBL" id="AE000782">
    <property type="protein sequence ID" value="AAB90923.1"/>
    <property type="molecule type" value="Genomic_DNA"/>
</dbReference>
<dbReference type="PIR" id="B69289">
    <property type="entry name" value="B69289"/>
</dbReference>
<dbReference type="RefSeq" id="WP_010877821.1">
    <property type="nucleotide sequence ID" value="NC_000917.1"/>
</dbReference>
<dbReference type="SMR" id="O29931"/>
<dbReference type="STRING" id="224325.AF_0314"/>
<dbReference type="PaxDb" id="224325-AF_0314"/>
<dbReference type="EnsemblBacteria" id="AAB90923">
    <property type="protein sequence ID" value="AAB90923"/>
    <property type="gene ID" value="AF_0314"/>
</dbReference>
<dbReference type="KEGG" id="afu:AF_0314"/>
<dbReference type="eggNOG" id="arCOG03880">
    <property type="taxonomic scope" value="Archaea"/>
</dbReference>
<dbReference type="HOGENOM" id="CLU_200885_3_1_2"/>
<dbReference type="OrthoDB" id="116241at2157"/>
<dbReference type="PhylomeDB" id="O29931"/>
<dbReference type="Proteomes" id="UP000002199">
    <property type="component" value="Chromosome"/>
</dbReference>
<dbReference type="Gene3D" id="4.10.1150.10">
    <property type="entry name" value="AF2212/PG0164-like"/>
    <property type="match status" value="1"/>
</dbReference>
<dbReference type="InterPro" id="IPR008203">
    <property type="entry name" value="AF2212-like"/>
</dbReference>
<dbReference type="InterPro" id="IPR024069">
    <property type="entry name" value="AF2212-like_dom_sf"/>
</dbReference>
<dbReference type="Pfam" id="PF01954">
    <property type="entry name" value="AF2212-like"/>
    <property type="match status" value="1"/>
</dbReference>
<dbReference type="SUPFAM" id="SSF141694">
    <property type="entry name" value="AF2212/PG0164-like"/>
    <property type="match status" value="1"/>
</dbReference>
<keyword id="KW-1185">Reference proteome</keyword>
<keyword id="KW-1277">Toxin-antitoxin system</keyword>
<feature type="chain" id="PRO_0000156846" description="Putative antitoxin VapB4">
    <location>
        <begin position="1"/>
        <end position="64"/>
    </location>
</feature>
<name>VAPB4_ARCFU</name>
<gene>
    <name type="primary">vapB4</name>
    <name type="ordered locus">AF_0314</name>
</gene>
<protein>
    <recommendedName>
        <fullName>Putative antitoxin VapB4</fullName>
    </recommendedName>
</protein>
<comment type="function">
    <text evidence="1">Possibly the antitoxin component of a type II toxin-antitoxin (TA) system. Its cognate toxin is VapC4 (Potential).</text>
</comment>
<comment type="similarity">
    <text evidence="1">Belongs to the UPF0165 family.</text>
</comment>
<accession>O29931</accession>
<evidence type="ECO:0000305" key="1"/>